<sequence length="202" mass="21274">MLKEILSSALLMLIMIDPSDKILLVSLLREDFHIEDVKSLIIRANLIGFILLLLFAVAGKIILQDIFHIELDALRVAGGFVLFKIGLEALEGGGMVTIKREKNILALAAVPVATPLIAGPAAITAAITLTAEHGIIVSIVGTLIAIAITAALMMIALYLMRGISKTALSVTIRIIGLFIMAIGAQMMITGAGGIVLNLIKGA</sequence>
<keyword id="KW-1003">Cell membrane</keyword>
<keyword id="KW-0472">Membrane</keyword>
<keyword id="KW-0812">Transmembrane</keyword>
<keyword id="KW-1133">Transmembrane helix</keyword>
<dbReference type="EMBL" id="BA000001">
    <property type="protein sequence ID" value="BAA29283.1"/>
    <property type="molecule type" value="Genomic_DNA"/>
</dbReference>
<dbReference type="PIR" id="D71244">
    <property type="entry name" value="D71244"/>
</dbReference>
<dbReference type="RefSeq" id="WP_010884322.1">
    <property type="nucleotide sequence ID" value="NC_000961.1"/>
</dbReference>
<dbReference type="TCDB" id="2.A.95.1.2">
    <property type="family name" value="the 6 tms neutral amino acid transporter (naat) family"/>
</dbReference>
<dbReference type="EnsemblBacteria" id="BAA29283">
    <property type="protein sequence ID" value="BAA29283"/>
    <property type="gene ID" value="BAA29283"/>
</dbReference>
<dbReference type="GeneID" id="1444104"/>
<dbReference type="KEGG" id="pho:PH0214"/>
<dbReference type="eggNOG" id="arCOG01997">
    <property type="taxonomic scope" value="Archaea"/>
</dbReference>
<dbReference type="OrthoDB" id="86226at2157"/>
<dbReference type="Proteomes" id="UP000000752">
    <property type="component" value="Chromosome"/>
</dbReference>
<dbReference type="GO" id="GO:0005886">
    <property type="term" value="C:plasma membrane"/>
    <property type="evidence" value="ECO:0007669"/>
    <property type="project" value="UniProtKB-SubCell"/>
</dbReference>
<dbReference type="InterPro" id="IPR002771">
    <property type="entry name" value="Multi_antbiot-R_MarC"/>
</dbReference>
<dbReference type="PANTHER" id="PTHR33508">
    <property type="entry name" value="UPF0056 MEMBRANE PROTEIN YHCE"/>
    <property type="match status" value="1"/>
</dbReference>
<dbReference type="PANTHER" id="PTHR33508:SF1">
    <property type="entry name" value="UPF0056 MEMBRANE PROTEIN YHCE"/>
    <property type="match status" value="1"/>
</dbReference>
<dbReference type="Pfam" id="PF01914">
    <property type="entry name" value="MarC"/>
    <property type="match status" value="1"/>
</dbReference>
<comment type="subcellular location">
    <subcellularLocation>
        <location evidence="2">Cell membrane</location>
        <topology evidence="2">Multi-pass membrane protein</topology>
    </subcellularLocation>
</comment>
<comment type="similarity">
    <text evidence="2">Belongs to the UPF0056 (MarC) family.</text>
</comment>
<accession>O57953</accession>
<name>Y214_PYRHO</name>
<protein>
    <recommendedName>
        <fullName>UPF0056 membrane protein PH0214</fullName>
    </recommendedName>
</protein>
<feature type="chain" id="PRO_0000156920" description="UPF0056 membrane protein PH0214">
    <location>
        <begin position="1"/>
        <end position="202"/>
    </location>
</feature>
<feature type="transmembrane region" description="Helical" evidence="1">
    <location>
        <begin position="5"/>
        <end position="25"/>
    </location>
</feature>
<feature type="transmembrane region" description="Helical" evidence="1">
    <location>
        <begin position="47"/>
        <end position="67"/>
    </location>
</feature>
<feature type="transmembrane region" description="Helical" evidence="1">
    <location>
        <begin position="76"/>
        <end position="96"/>
    </location>
</feature>
<feature type="transmembrane region" description="Helical" evidence="1">
    <location>
        <begin position="104"/>
        <end position="124"/>
    </location>
</feature>
<feature type="transmembrane region" description="Helical" evidence="1">
    <location>
        <begin position="135"/>
        <end position="155"/>
    </location>
</feature>
<feature type="transmembrane region" description="Helical" evidence="1">
    <location>
        <begin position="174"/>
        <end position="194"/>
    </location>
</feature>
<proteinExistence type="inferred from homology"/>
<evidence type="ECO:0000255" key="1"/>
<evidence type="ECO:0000305" key="2"/>
<gene>
    <name type="ordered locus">PH0214</name>
    <name type="ORF">PHBW009</name>
</gene>
<reference key="1">
    <citation type="journal article" date="1998" name="DNA Res.">
        <title>Complete sequence and gene organization of the genome of a hyper-thermophilic archaebacterium, Pyrococcus horikoshii OT3.</title>
        <authorList>
            <person name="Kawarabayasi Y."/>
            <person name="Sawada M."/>
            <person name="Horikawa H."/>
            <person name="Haikawa Y."/>
            <person name="Hino Y."/>
            <person name="Yamamoto S."/>
            <person name="Sekine M."/>
            <person name="Baba S."/>
            <person name="Kosugi H."/>
            <person name="Hosoyama A."/>
            <person name="Nagai Y."/>
            <person name="Sakai M."/>
            <person name="Ogura K."/>
            <person name="Otsuka R."/>
            <person name="Nakazawa H."/>
            <person name="Takamiya M."/>
            <person name="Ohfuku Y."/>
            <person name="Funahashi T."/>
            <person name="Tanaka T."/>
            <person name="Kudoh Y."/>
            <person name="Yamazaki J."/>
            <person name="Kushida N."/>
            <person name="Oguchi A."/>
            <person name="Aoki K."/>
            <person name="Yoshizawa T."/>
            <person name="Nakamura Y."/>
            <person name="Robb F.T."/>
            <person name="Horikoshi K."/>
            <person name="Masuchi Y."/>
            <person name="Shizuya H."/>
            <person name="Kikuchi H."/>
        </authorList>
    </citation>
    <scope>NUCLEOTIDE SEQUENCE [LARGE SCALE GENOMIC DNA]</scope>
    <source>
        <strain>ATCC 700860 / DSM 12428 / JCM 9974 / NBRC 100139 / OT-3</strain>
    </source>
</reference>
<organism>
    <name type="scientific">Pyrococcus horikoshii (strain ATCC 700860 / DSM 12428 / JCM 9974 / NBRC 100139 / OT-3)</name>
    <dbReference type="NCBI Taxonomy" id="70601"/>
    <lineage>
        <taxon>Archaea</taxon>
        <taxon>Methanobacteriati</taxon>
        <taxon>Methanobacteriota</taxon>
        <taxon>Thermococci</taxon>
        <taxon>Thermococcales</taxon>
        <taxon>Thermococcaceae</taxon>
        <taxon>Pyrococcus</taxon>
    </lineage>
</organism>